<keyword id="KW-0479">Metal-binding</keyword>
<keyword id="KW-0520">NAD</keyword>
<keyword id="KW-0521">NADP</keyword>
<keyword id="KW-0558">Oxidation</keyword>
<keyword id="KW-0560">Oxidoreductase</keyword>
<keyword id="KW-0630">Potassium</keyword>
<proteinExistence type="inferred from homology"/>
<organism>
    <name type="scientific">Yersinia pseudotuberculosis serotype O:1b (strain IP 31758)</name>
    <dbReference type="NCBI Taxonomy" id="349747"/>
    <lineage>
        <taxon>Bacteria</taxon>
        <taxon>Pseudomonadati</taxon>
        <taxon>Pseudomonadota</taxon>
        <taxon>Gammaproteobacteria</taxon>
        <taxon>Enterobacterales</taxon>
        <taxon>Yersiniaceae</taxon>
        <taxon>Yersinia</taxon>
    </lineage>
</organism>
<gene>
    <name evidence="1" type="primary">betB</name>
    <name type="ordered locus">YpsIP31758_2830</name>
</gene>
<feature type="chain" id="PRO_1000062271" description="Betaine aldehyde dehydrogenase">
    <location>
        <begin position="1"/>
        <end position="490"/>
    </location>
</feature>
<feature type="active site" description="Charge relay system" evidence="1">
    <location>
        <position position="162"/>
    </location>
</feature>
<feature type="active site" description="Proton acceptor" evidence="1">
    <location>
        <position position="252"/>
    </location>
</feature>
<feature type="active site" description="Nucleophile" evidence="1">
    <location>
        <position position="286"/>
    </location>
</feature>
<feature type="active site" description="Charge relay system" evidence="1">
    <location>
        <position position="464"/>
    </location>
</feature>
<feature type="binding site" evidence="1">
    <location>
        <position position="93"/>
    </location>
    <ligand>
        <name>K(+)</name>
        <dbReference type="ChEBI" id="CHEBI:29103"/>
        <label>1</label>
    </ligand>
</feature>
<feature type="binding site" evidence="1">
    <location>
        <begin position="150"/>
        <end position="152"/>
    </location>
    <ligand>
        <name>NAD(+)</name>
        <dbReference type="ChEBI" id="CHEBI:57540"/>
    </ligand>
</feature>
<feature type="binding site" evidence="1">
    <location>
        <begin position="176"/>
        <end position="179"/>
    </location>
    <ligand>
        <name>NAD(+)</name>
        <dbReference type="ChEBI" id="CHEBI:57540"/>
    </ligand>
</feature>
<feature type="binding site" evidence="1">
    <location>
        <position position="180"/>
    </location>
    <ligand>
        <name>K(+)</name>
        <dbReference type="ChEBI" id="CHEBI:29103"/>
        <label>1</label>
    </ligand>
</feature>
<feature type="binding site" evidence="1">
    <location>
        <begin position="230"/>
        <end position="233"/>
    </location>
    <ligand>
        <name>NAD(+)</name>
        <dbReference type="ChEBI" id="CHEBI:57540"/>
    </ligand>
</feature>
<feature type="binding site" evidence="1">
    <location>
        <position position="246"/>
    </location>
    <ligand>
        <name>K(+)</name>
        <dbReference type="ChEBI" id="CHEBI:29103"/>
        <label>2</label>
    </ligand>
</feature>
<feature type="binding site" evidence="1">
    <location>
        <position position="254"/>
    </location>
    <ligand>
        <name>NAD(+)</name>
        <dbReference type="ChEBI" id="CHEBI:57540"/>
    </ligand>
</feature>
<feature type="binding site" description="covalent" evidence="1">
    <location>
        <position position="286"/>
    </location>
    <ligand>
        <name>NAD(+)</name>
        <dbReference type="ChEBI" id="CHEBI:57540"/>
    </ligand>
</feature>
<feature type="binding site" evidence="1">
    <location>
        <position position="387"/>
    </location>
    <ligand>
        <name>NAD(+)</name>
        <dbReference type="ChEBI" id="CHEBI:57540"/>
    </ligand>
</feature>
<feature type="binding site" evidence="1">
    <location>
        <position position="457"/>
    </location>
    <ligand>
        <name>K(+)</name>
        <dbReference type="ChEBI" id="CHEBI:29103"/>
        <label>2</label>
    </ligand>
</feature>
<feature type="binding site" evidence="1">
    <location>
        <position position="460"/>
    </location>
    <ligand>
        <name>K(+)</name>
        <dbReference type="ChEBI" id="CHEBI:29103"/>
        <label>2</label>
    </ligand>
</feature>
<feature type="site" description="Seems to be a necessary countercharge to the potassium cations" evidence="1">
    <location>
        <position position="248"/>
    </location>
</feature>
<feature type="modified residue" description="Cysteine sulfenic acid (-SOH)" evidence="1">
    <location>
        <position position="286"/>
    </location>
</feature>
<evidence type="ECO:0000255" key="1">
    <source>
        <dbReference type="HAMAP-Rule" id="MF_00804"/>
    </source>
</evidence>
<sequence length="490" mass="52696">MSRYGLQKLYINGAYTDSASGDTFDAVNPANGECIAQLQAANAQDVDKAVAAAKQGQPVWAAMTAMERSRILRRAVDILRDRNDELAAIETADTGKPLSETRSVDIVTGADVLEYYAGLIPALEGQQIPLRGSAFVYTRREPLGVVAGIGAWNYPIQIALWKSAPALAAGNAMIFKPSEVTSLTALKLAEIYTEAGLPAGVFNVLTGSGDQVGQMLTEHPGIAKVSFTGGIASGKKVMANAAGSTLKDVTMELGGKSPLIIFADADLDKAADIAMMANFYSSGQVCTNGTRVFVPQALQAAFEQKIVERVKRIHIGDPSDERTNFGPLVSFQHRDSVMRYIDSGKREGATLLIGGYSLTEDALAHGAYVAPTVFTHCRDDMQIVREEIFGPVMSILSYQSEEEVIRRANDTEYGLAAGVVTQDLNRAHRVIHQLQAGICWINTWGESAPEMPVGGYKHSGVGRENGISTLEHYTQIKSIQVELGSFNSVF</sequence>
<comment type="function">
    <text evidence="1">Involved in the biosynthesis of the osmoprotectant glycine betaine. Catalyzes the irreversible oxidation of betaine aldehyde to the corresponding acid.</text>
</comment>
<comment type="catalytic activity">
    <reaction evidence="1">
        <text>betaine aldehyde + NAD(+) + H2O = glycine betaine + NADH + 2 H(+)</text>
        <dbReference type="Rhea" id="RHEA:15305"/>
        <dbReference type="ChEBI" id="CHEBI:15377"/>
        <dbReference type="ChEBI" id="CHEBI:15378"/>
        <dbReference type="ChEBI" id="CHEBI:15710"/>
        <dbReference type="ChEBI" id="CHEBI:17750"/>
        <dbReference type="ChEBI" id="CHEBI:57540"/>
        <dbReference type="ChEBI" id="CHEBI:57945"/>
        <dbReference type="EC" id="1.2.1.8"/>
    </reaction>
    <physiologicalReaction direction="left-to-right" evidence="1">
        <dbReference type="Rhea" id="RHEA:15306"/>
    </physiologicalReaction>
</comment>
<comment type="cofactor">
    <cofactor evidence="1">
        <name>K(+)</name>
        <dbReference type="ChEBI" id="CHEBI:29103"/>
    </cofactor>
    <text evidence="1">Binds 2 potassium ions per subunit.</text>
</comment>
<comment type="pathway">
    <text evidence="1">Amine and polyamine biosynthesis; betaine biosynthesis via choline pathway; betaine from betaine aldehyde: step 1/1.</text>
</comment>
<comment type="subunit">
    <text evidence="1">Dimer of dimers.</text>
</comment>
<comment type="similarity">
    <text evidence="1">Belongs to the aldehyde dehydrogenase family.</text>
</comment>
<protein>
    <recommendedName>
        <fullName evidence="1">Betaine aldehyde dehydrogenase</fullName>
        <shortName evidence="1">BADH</shortName>
        <ecNumber evidence="1">1.2.1.8</ecNumber>
    </recommendedName>
</protein>
<name>BETB_YERP3</name>
<accession>A7FKL5</accession>
<reference key="1">
    <citation type="journal article" date="2007" name="PLoS Genet.">
        <title>The complete genome sequence of Yersinia pseudotuberculosis IP31758, the causative agent of Far East scarlet-like fever.</title>
        <authorList>
            <person name="Eppinger M."/>
            <person name="Rosovitz M.J."/>
            <person name="Fricke W.F."/>
            <person name="Rasko D.A."/>
            <person name="Kokorina G."/>
            <person name="Fayolle C."/>
            <person name="Lindler L.E."/>
            <person name="Carniel E."/>
            <person name="Ravel J."/>
        </authorList>
    </citation>
    <scope>NUCLEOTIDE SEQUENCE [LARGE SCALE GENOMIC DNA]</scope>
    <source>
        <strain>IP 31758</strain>
    </source>
</reference>
<dbReference type="EC" id="1.2.1.8" evidence="1"/>
<dbReference type="EMBL" id="CP000720">
    <property type="protein sequence ID" value="ABS49597.1"/>
    <property type="molecule type" value="Genomic_DNA"/>
</dbReference>
<dbReference type="RefSeq" id="WP_012105473.1">
    <property type="nucleotide sequence ID" value="NC_009708.1"/>
</dbReference>
<dbReference type="SMR" id="A7FKL5"/>
<dbReference type="KEGG" id="ypi:YpsIP31758_2830"/>
<dbReference type="HOGENOM" id="CLU_005391_0_1_6"/>
<dbReference type="UniPathway" id="UPA00529">
    <property type="reaction ID" value="UER00386"/>
</dbReference>
<dbReference type="Proteomes" id="UP000002412">
    <property type="component" value="Chromosome"/>
</dbReference>
<dbReference type="GO" id="GO:0008802">
    <property type="term" value="F:betaine-aldehyde dehydrogenase (NAD+) activity"/>
    <property type="evidence" value="ECO:0007669"/>
    <property type="project" value="UniProtKB-UniRule"/>
</dbReference>
<dbReference type="GO" id="GO:0046872">
    <property type="term" value="F:metal ion binding"/>
    <property type="evidence" value="ECO:0007669"/>
    <property type="project" value="UniProtKB-KW"/>
</dbReference>
<dbReference type="GO" id="GO:0019285">
    <property type="term" value="P:glycine betaine biosynthetic process from choline"/>
    <property type="evidence" value="ECO:0007669"/>
    <property type="project" value="UniProtKB-UniRule"/>
</dbReference>
<dbReference type="CDD" id="cd07090">
    <property type="entry name" value="ALDH_F9_TMBADH"/>
    <property type="match status" value="1"/>
</dbReference>
<dbReference type="FunFam" id="3.40.309.10:FF:000014">
    <property type="entry name" value="NAD/NADP-dependent betaine aldehyde dehydrogenase"/>
    <property type="match status" value="1"/>
</dbReference>
<dbReference type="FunFam" id="3.40.605.10:FF:000007">
    <property type="entry name" value="NAD/NADP-dependent betaine aldehyde dehydrogenase"/>
    <property type="match status" value="1"/>
</dbReference>
<dbReference type="Gene3D" id="3.40.605.10">
    <property type="entry name" value="Aldehyde Dehydrogenase, Chain A, domain 1"/>
    <property type="match status" value="1"/>
</dbReference>
<dbReference type="Gene3D" id="3.40.309.10">
    <property type="entry name" value="Aldehyde Dehydrogenase, Chain A, domain 2"/>
    <property type="match status" value="1"/>
</dbReference>
<dbReference type="HAMAP" id="MF_00804">
    <property type="entry name" value="BADH"/>
    <property type="match status" value="1"/>
</dbReference>
<dbReference type="InterPro" id="IPR016161">
    <property type="entry name" value="Ald_DH/histidinol_DH"/>
</dbReference>
<dbReference type="InterPro" id="IPR016163">
    <property type="entry name" value="Ald_DH_C"/>
</dbReference>
<dbReference type="InterPro" id="IPR016160">
    <property type="entry name" value="Ald_DH_CS_CYS"/>
</dbReference>
<dbReference type="InterPro" id="IPR029510">
    <property type="entry name" value="Ald_DH_CS_GLU"/>
</dbReference>
<dbReference type="InterPro" id="IPR016162">
    <property type="entry name" value="Ald_DH_N"/>
</dbReference>
<dbReference type="InterPro" id="IPR015590">
    <property type="entry name" value="Aldehyde_DH_dom"/>
</dbReference>
<dbReference type="InterPro" id="IPR011264">
    <property type="entry name" value="BADH"/>
</dbReference>
<dbReference type="NCBIfam" id="TIGR01804">
    <property type="entry name" value="BADH"/>
    <property type="match status" value="1"/>
</dbReference>
<dbReference type="NCBIfam" id="NF009725">
    <property type="entry name" value="PRK13252.1"/>
    <property type="match status" value="1"/>
</dbReference>
<dbReference type="PANTHER" id="PTHR11699">
    <property type="entry name" value="ALDEHYDE DEHYDROGENASE-RELATED"/>
    <property type="match status" value="1"/>
</dbReference>
<dbReference type="Pfam" id="PF00171">
    <property type="entry name" value="Aldedh"/>
    <property type="match status" value="1"/>
</dbReference>
<dbReference type="SUPFAM" id="SSF53720">
    <property type="entry name" value="ALDH-like"/>
    <property type="match status" value="1"/>
</dbReference>
<dbReference type="PROSITE" id="PS00070">
    <property type="entry name" value="ALDEHYDE_DEHYDR_CYS"/>
    <property type="match status" value="1"/>
</dbReference>
<dbReference type="PROSITE" id="PS00687">
    <property type="entry name" value="ALDEHYDE_DEHYDR_GLU"/>
    <property type="match status" value="1"/>
</dbReference>